<accession>Q081N3</accession>
<feature type="chain" id="PRO_0000314379" description="Carboxy-S-adenosyl-L-methionine synthase">
    <location>
        <begin position="1"/>
        <end position="243"/>
    </location>
</feature>
<feature type="binding site" evidence="1">
    <location>
        <position position="40"/>
    </location>
    <ligand>
        <name>S-adenosyl-L-methionine</name>
        <dbReference type="ChEBI" id="CHEBI:59789"/>
    </ligand>
</feature>
<feature type="binding site" evidence="1">
    <location>
        <begin position="65"/>
        <end position="67"/>
    </location>
    <ligand>
        <name>S-adenosyl-L-methionine</name>
        <dbReference type="ChEBI" id="CHEBI:59789"/>
    </ligand>
</feature>
<feature type="binding site" evidence="1">
    <location>
        <begin position="90"/>
        <end position="91"/>
    </location>
    <ligand>
        <name>S-adenosyl-L-methionine</name>
        <dbReference type="ChEBI" id="CHEBI:59789"/>
    </ligand>
</feature>
<feature type="binding site" evidence="1">
    <location>
        <begin position="118"/>
        <end position="119"/>
    </location>
    <ligand>
        <name>S-adenosyl-L-methionine</name>
        <dbReference type="ChEBI" id="CHEBI:59789"/>
    </ligand>
</feature>
<feature type="binding site" evidence="1">
    <location>
        <position position="133"/>
    </location>
    <ligand>
        <name>S-adenosyl-L-methionine</name>
        <dbReference type="ChEBI" id="CHEBI:59789"/>
    </ligand>
</feature>
<feature type="binding site" evidence="1">
    <location>
        <position position="200"/>
    </location>
    <ligand>
        <name>S-adenosyl-L-methionine</name>
        <dbReference type="ChEBI" id="CHEBI:59789"/>
    </ligand>
</feature>
<dbReference type="EC" id="2.1.3.-" evidence="1"/>
<dbReference type="EMBL" id="CP000447">
    <property type="protein sequence ID" value="ABI72032.1"/>
    <property type="molecule type" value="Genomic_DNA"/>
</dbReference>
<dbReference type="RefSeq" id="WP_011637642.1">
    <property type="nucleotide sequence ID" value="NC_008345.1"/>
</dbReference>
<dbReference type="SMR" id="Q081N3"/>
<dbReference type="STRING" id="318167.Sfri_2186"/>
<dbReference type="KEGG" id="sfr:Sfri_2186"/>
<dbReference type="eggNOG" id="COG2226">
    <property type="taxonomic scope" value="Bacteria"/>
</dbReference>
<dbReference type="HOGENOM" id="CLU_078475_0_0_6"/>
<dbReference type="OrthoDB" id="9779941at2"/>
<dbReference type="Proteomes" id="UP000000684">
    <property type="component" value="Chromosome"/>
</dbReference>
<dbReference type="GO" id="GO:0016743">
    <property type="term" value="F:carboxyl- or carbamoyltransferase activity"/>
    <property type="evidence" value="ECO:0007669"/>
    <property type="project" value="UniProtKB-UniRule"/>
</dbReference>
<dbReference type="GO" id="GO:1904047">
    <property type="term" value="F:S-adenosyl-L-methionine binding"/>
    <property type="evidence" value="ECO:0007669"/>
    <property type="project" value="UniProtKB-UniRule"/>
</dbReference>
<dbReference type="GO" id="GO:0002098">
    <property type="term" value="P:tRNA wobble uridine modification"/>
    <property type="evidence" value="ECO:0007669"/>
    <property type="project" value="InterPro"/>
</dbReference>
<dbReference type="CDD" id="cd02440">
    <property type="entry name" value="AdoMet_MTases"/>
    <property type="match status" value="1"/>
</dbReference>
<dbReference type="Gene3D" id="3.40.50.150">
    <property type="entry name" value="Vaccinia Virus protein VP39"/>
    <property type="match status" value="1"/>
</dbReference>
<dbReference type="HAMAP" id="MF_01589">
    <property type="entry name" value="Cx_SAM_synthase"/>
    <property type="match status" value="1"/>
</dbReference>
<dbReference type="InterPro" id="IPR005271">
    <property type="entry name" value="CmoA"/>
</dbReference>
<dbReference type="InterPro" id="IPR041698">
    <property type="entry name" value="Methyltransf_25"/>
</dbReference>
<dbReference type="InterPro" id="IPR029063">
    <property type="entry name" value="SAM-dependent_MTases_sf"/>
</dbReference>
<dbReference type="NCBIfam" id="TIGR00740">
    <property type="entry name" value="carboxy-S-adenosyl-L-methionine synthase CmoA"/>
    <property type="match status" value="1"/>
</dbReference>
<dbReference type="NCBIfam" id="NF011995">
    <property type="entry name" value="PRK15451.1"/>
    <property type="match status" value="1"/>
</dbReference>
<dbReference type="PANTHER" id="PTHR43861:SF2">
    <property type="entry name" value="CARBOXY-S-ADENOSYL-L-METHIONINE SYNTHASE"/>
    <property type="match status" value="1"/>
</dbReference>
<dbReference type="PANTHER" id="PTHR43861">
    <property type="entry name" value="TRANS-ACONITATE 2-METHYLTRANSFERASE-RELATED"/>
    <property type="match status" value="1"/>
</dbReference>
<dbReference type="Pfam" id="PF13649">
    <property type="entry name" value="Methyltransf_25"/>
    <property type="match status" value="1"/>
</dbReference>
<dbReference type="PIRSF" id="PIRSF006325">
    <property type="entry name" value="MeTrfase_bac"/>
    <property type="match status" value="1"/>
</dbReference>
<dbReference type="SUPFAM" id="SSF53335">
    <property type="entry name" value="S-adenosyl-L-methionine-dependent methyltransferases"/>
    <property type="match status" value="1"/>
</dbReference>
<evidence type="ECO:0000255" key="1">
    <source>
        <dbReference type="HAMAP-Rule" id="MF_01589"/>
    </source>
</evidence>
<protein>
    <recommendedName>
        <fullName evidence="1">Carboxy-S-adenosyl-L-methionine synthase</fullName>
        <shortName evidence="1">Cx-SAM synthase</shortName>
        <ecNumber evidence="1">2.1.3.-</ecNumber>
    </recommendedName>
</protein>
<organism>
    <name type="scientific">Shewanella frigidimarina (strain NCIMB 400)</name>
    <dbReference type="NCBI Taxonomy" id="318167"/>
    <lineage>
        <taxon>Bacteria</taxon>
        <taxon>Pseudomonadati</taxon>
        <taxon>Pseudomonadota</taxon>
        <taxon>Gammaproteobacteria</taxon>
        <taxon>Alteromonadales</taxon>
        <taxon>Shewanellaceae</taxon>
        <taxon>Shewanella</taxon>
    </lineage>
</organism>
<reference key="1">
    <citation type="submission" date="2006-08" db="EMBL/GenBank/DDBJ databases">
        <title>Complete sequence of Shewanella frigidimarina NCIMB 400.</title>
        <authorList>
            <consortium name="US DOE Joint Genome Institute"/>
            <person name="Copeland A."/>
            <person name="Lucas S."/>
            <person name="Lapidus A."/>
            <person name="Barry K."/>
            <person name="Detter J.C."/>
            <person name="Glavina del Rio T."/>
            <person name="Hammon N."/>
            <person name="Israni S."/>
            <person name="Dalin E."/>
            <person name="Tice H."/>
            <person name="Pitluck S."/>
            <person name="Fredrickson J.K."/>
            <person name="Kolker E."/>
            <person name="McCuel L.A."/>
            <person name="DiChristina T."/>
            <person name="Nealson K.H."/>
            <person name="Newman D."/>
            <person name="Tiedje J.M."/>
            <person name="Zhou J."/>
            <person name="Romine M.F."/>
            <person name="Culley D.E."/>
            <person name="Serres M."/>
            <person name="Chertkov O."/>
            <person name="Brettin T."/>
            <person name="Bruce D."/>
            <person name="Han C."/>
            <person name="Tapia R."/>
            <person name="Gilna P."/>
            <person name="Schmutz J."/>
            <person name="Larimer F."/>
            <person name="Land M."/>
            <person name="Hauser L."/>
            <person name="Kyrpides N."/>
            <person name="Mikhailova N."/>
            <person name="Richardson P."/>
        </authorList>
    </citation>
    <scope>NUCLEOTIDE SEQUENCE [LARGE SCALE GENOMIC DNA]</scope>
    <source>
        <strain>NCIMB 400</strain>
    </source>
</reference>
<sequence>MNSQQDTIYAHVTDQITDFQFDQRVAGVFNDMIRRSVPGYAQIINTIGDFANRFVTPQSNIYDLGSSLGSATLSIRRQIEGRGCQIYAVDNSQSMIERCTENLAAYVSDIKVNLLCADIRDIDIKNASMVVLNFTLQFLPTHDRDALIKRIYDGMLPGGILVISEKLFFEDNHIQQLLDEQHLDFKRANGYSELEISQKRSALENVMRPDSLNVHQQRLTENGFSHFSVWFQCFNFASMVAIK</sequence>
<name>CMOA_SHEFN</name>
<comment type="function">
    <text evidence="1">Catalyzes the conversion of S-adenosyl-L-methionine (SAM) to carboxy-S-adenosyl-L-methionine (Cx-SAM).</text>
</comment>
<comment type="catalytic activity">
    <reaction evidence="1">
        <text>prephenate + S-adenosyl-L-methionine = carboxy-S-adenosyl-L-methionine + 3-phenylpyruvate + H2O</text>
        <dbReference type="Rhea" id="RHEA:51692"/>
        <dbReference type="ChEBI" id="CHEBI:15377"/>
        <dbReference type="ChEBI" id="CHEBI:18005"/>
        <dbReference type="ChEBI" id="CHEBI:29934"/>
        <dbReference type="ChEBI" id="CHEBI:59789"/>
        <dbReference type="ChEBI" id="CHEBI:134278"/>
    </reaction>
</comment>
<comment type="subunit">
    <text evidence="1">Homodimer.</text>
</comment>
<comment type="similarity">
    <text evidence="1">Belongs to the class I-like SAM-binding methyltransferase superfamily. Cx-SAM synthase family.</text>
</comment>
<gene>
    <name evidence="1" type="primary">cmoA</name>
    <name type="ordered locus">Sfri_2186</name>
</gene>
<proteinExistence type="inferred from homology"/>
<keyword id="KW-1185">Reference proteome</keyword>
<keyword id="KW-0949">S-adenosyl-L-methionine</keyword>
<keyword id="KW-0808">Transferase</keyword>